<organism>
    <name type="scientific">Dictyostelium discoideum</name>
    <name type="common">Social amoeba</name>
    <dbReference type="NCBI Taxonomy" id="44689"/>
    <lineage>
        <taxon>Eukaryota</taxon>
        <taxon>Amoebozoa</taxon>
        <taxon>Evosea</taxon>
        <taxon>Eumycetozoa</taxon>
        <taxon>Dictyostelia</taxon>
        <taxon>Dictyosteliales</taxon>
        <taxon>Dictyosteliaceae</taxon>
        <taxon>Dictyostelium</taxon>
    </lineage>
</organism>
<dbReference type="EMBL" id="AAFI02000019">
    <property type="protein sequence ID" value="EAL68764.1"/>
    <property type="molecule type" value="Genomic_DNA"/>
</dbReference>
<dbReference type="RefSeq" id="XP_642797.1">
    <property type="nucleotide sequence ID" value="XM_637705.1"/>
</dbReference>
<dbReference type="SMR" id="Q76NZ7"/>
<dbReference type="FunCoup" id="Q76NZ7">
    <property type="interactions" value="13"/>
</dbReference>
<dbReference type="STRING" id="44689.Q76NZ7"/>
<dbReference type="PaxDb" id="44689-DDB0232414"/>
<dbReference type="EnsemblProtists" id="EAL68764">
    <property type="protein sequence ID" value="EAL68764"/>
    <property type="gene ID" value="DDB_G0277157"/>
</dbReference>
<dbReference type="GeneID" id="8620990"/>
<dbReference type="KEGG" id="ddi:DDB_G0277157"/>
<dbReference type="dictyBase" id="DDB_G0277157">
    <property type="gene designation" value="nubp2"/>
</dbReference>
<dbReference type="VEuPathDB" id="AmoebaDB:DDB_G0277157"/>
<dbReference type="eggNOG" id="KOG3022">
    <property type="taxonomic scope" value="Eukaryota"/>
</dbReference>
<dbReference type="HOGENOM" id="CLU_024839_0_1_1"/>
<dbReference type="InParanoid" id="Q76NZ7"/>
<dbReference type="OMA" id="VSGCPMR"/>
<dbReference type="PhylomeDB" id="Q76NZ7"/>
<dbReference type="PRO" id="PR:Q76NZ7"/>
<dbReference type="Proteomes" id="UP000002195">
    <property type="component" value="Chromosome 2"/>
</dbReference>
<dbReference type="GO" id="GO:0005829">
    <property type="term" value="C:cytosol"/>
    <property type="evidence" value="ECO:0000318"/>
    <property type="project" value="GO_Central"/>
</dbReference>
<dbReference type="GO" id="GO:0051539">
    <property type="term" value="F:4 iron, 4 sulfur cluster binding"/>
    <property type="evidence" value="ECO:0007669"/>
    <property type="project" value="UniProtKB-UniRule"/>
</dbReference>
<dbReference type="GO" id="GO:0005524">
    <property type="term" value="F:ATP binding"/>
    <property type="evidence" value="ECO:0007669"/>
    <property type="project" value="UniProtKB-KW"/>
</dbReference>
<dbReference type="GO" id="GO:0140663">
    <property type="term" value="F:ATP-dependent FeS chaperone activity"/>
    <property type="evidence" value="ECO:0007669"/>
    <property type="project" value="InterPro"/>
</dbReference>
<dbReference type="GO" id="GO:0051536">
    <property type="term" value="F:iron-sulfur cluster binding"/>
    <property type="evidence" value="ECO:0000318"/>
    <property type="project" value="GO_Central"/>
</dbReference>
<dbReference type="GO" id="GO:0046872">
    <property type="term" value="F:metal ion binding"/>
    <property type="evidence" value="ECO:0007669"/>
    <property type="project" value="UniProtKB-KW"/>
</dbReference>
<dbReference type="GO" id="GO:0016226">
    <property type="term" value="P:iron-sulfur cluster assembly"/>
    <property type="evidence" value="ECO:0000318"/>
    <property type="project" value="GO_Central"/>
</dbReference>
<dbReference type="CDD" id="cd02037">
    <property type="entry name" value="Mrp_NBP35"/>
    <property type="match status" value="1"/>
</dbReference>
<dbReference type="FunFam" id="3.40.50.300:FF:000796">
    <property type="entry name" value="Cytosolic Fe-S cluster assembly factor NUBP2"/>
    <property type="match status" value="1"/>
</dbReference>
<dbReference type="Gene3D" id="3.40.50.300">
    <property type="entry name" value="P-loop containing nucleotide triphosphate hydrolases"/>
    <property type="match status" value="1"/>
</dbReference>
<dbReference type="HAMAP" id="MF_02040">
    <property type="entry name" value="Mrp_NBP35"/>
    <property type="match status" value="1"/>
</dbReference>
<dbReference type="HAMAP" id="MF_03039">
    <property type="entry name" value="NUBP2"/>
    <property type="match status" value="1"/>
</dbReference>
<dbReference type="InterPro" id="IPR000808">
    <property type="entry name" value="Mrp-like_CS"/>
</dbReference>
<dbReference type="InterPro" id="IPR019591">
    <property type="entry name" value="Mrp/NBP35_ATP-bd"/>
</dbReference>
<dbReference type="InterPro" id="IPR028600">
    <property type="entry name" value="NUBP2/Cfd1_eukaryotes"/>
</dbReference>
<dbReference type="InterPro" id="IPR027417">
    <property type="entry name" value="P-loop_NTPase"/>
</dbReference>
<dbReference type="InterPro" id="IPR033756">
    <property type="entry name" value="YlxH/NBP35"/>
</dbReference>
<dbReference type="PANTHER" id="PTHR23264:SF19">
    <property type="entry name" value="CYTOSOLIC FE-S CLUSTER ASSEMBLY FACTOR NUBP2"/>
    <property type="match status" value="1"/>
</dbReference>
<dbReference type="PANTHER" id="PTHR23264">
    <property type="entry name" value="NUCLEOTIDE-BINDING PROTEIN NBP35 YEAST -RELATED"/>
    <property type="match status" value="1"/>
</dbReference>
<dbReference type="Pfam" id="PF10609">
    <property type="entry name" value="ParA"/>
    <property type="match status" value="1"/>
</dbReference>
<dbReference type="SUPFAM" id="SSF52540">
    <property type="entry name" value="P-loop containing nucleoside triphosphate hydrolases"/>
    <property type="match status" value="1"/>
</dbReference>
<dbReference type="PROSITE" id="PS01215">
    <property type="entry name" value="MRP"/>
    <property type="match status" value="1"/>
</dbReference>
<feature type="chain" id="PRO_0000327962" description="Cytosolic Fe-S cluster assembly factor NUBP2 homolog">
    <location>
        <begin position="1"/>
        <end position="265"/>
    </location>
</feature>
<feature type="binding site" evidence="1">
    <location>
        <begin position="13"/>
        <end position="20"/>
    </location>
    <ligand>
        <name>ATP</name>
        <dbReference type="ChEBI" id="CHEBI:30616"/>
    </ligand>
</feature>
<feature type="binding site" evidence="1">
    <location>
        <position position="187"/>
    </location>
    <ligand>
        <name>[4Fe-4S] cluster</name>
        <dbReference type="ChEBI" id="CHEBI:49883"/>
        <note>ligand shared between dimeric partners</note>
    </ligand>
</feature>
<feature type="binding site" evidence="1">
    <location>
        <position position="190"/>
    </location>
    <ligand>
        <name>[4Fe-4S] cluster</name>
        <dbReference type="ChEBI" id="CHEBI:49883"/>
        <note>ligand shared between dimeric partners</note>
    </ligand>
</feature>
<reference key="1">
    <citation type="journal article" date="2002" name="Nature">
        <title>Sequence and analysis of chromosome 2 of Dictyostelium discoideum.</title>
        <authorList>
            <person name="Gloeckner G."/>
            <person name="Eichinger L."/>
            <person name="Szafranski K."/>
            <person name="Pachebat J.A."/>
            <person name="Bankier A.T."/>
            <person name="Dear P.H."/>
            <person name="Lehmann R."/>
            <person name="Baumgart C."/>
            <person name="Parra G."/>
            <person name="Abril J.F."/>
            <person name="Guigo R."/>
            <person name="Kumpf K."/>
            <person name="Tunggal B."/>
            <person name="Cox E.C."/>
            <person name="Quail M.A."/>
            <person name="Platzer M."/>
            <person name="Rosenthal A."/>
            <person name="Noegel A.A."/>
        </authorList>
    </citation>
    <scope>NUCLEOTIDE SEQUENCE [LARGE SCALE GENOMIC DNA]</scope>
    <source>
        <strain>AX4</strain>
    </source>
</reference>
<reference key="2">
    <citation type="journal article" date="2005" name="Nature">
        <title>The genome of the social amoeba Dictyostelium discoideum.</title>
        <authorList>
            <person name="Eichinger L."/>
            <person name="Pachebat J.A."/>
            <person name="Gloeckner G."/>
            <person name="Rajandream M.A."/>
            <person name="Sucgang R."/>
            <person name="Berriman M."/>
            <person name="Song J."/>
            <person name="Olsen R."/>
            <person name="Szafranski K."/>
            <person name="Xu Q."/>
            <person name="Tunggal B."/>
            <person name="Kummerfeld S."/>
            <person name="Madera M."/>
            <person name="Konfortov B.A."/>
            <person name="Rivero F."/>
            <person name="Bankier A.T."/>
            <person name="Lehmann R."/>
            <person name="Hamlin N."/>
            <person name="Davies R."/>
            <person name="Gaudet P."/>
            <person name="Fey P."/>
            <person name="Pilcher K."/>
            <person name="Chen G."/>
            <person name="Saunders D."/>
            <person name="Sodergren E.J."/>
            <person name="Davis P."/>
            <person name="Kerhornou A."/>
            <person name="Nie X."/>
            <person name="Hall N."/>
            <person name="Anjard C."/>
            <person name="Hemphill L."/>
            <person name="Bason N."/>
            <person name="Farbrother P."/>
            <person name="Desany B."/>
            <person name="Just E."/>
            <person name="Morio T."/>
            <person name="Rost R."/>
            <person name="Churcher C.M."/>
            <person name="Cooper J."/>
            <person name="Haydock S."/>
            <person name="van Driessche N."/>
            <person name="Cronin A."/>
            <person name="Goodhead I."/>
            <person name="Muzny D.M."/>
            <person name="Mourier T."/>
            <person name="Pain A."/>
            <person name="Lu M."/>
            <person name="Harper D."/>
            <person name="Lindsay R."/>
            <person name="Hauser H."/>
            <person name="James K.D."/>
            <person name="Quiles M."/>
            <person name="Madan Babu M."/>
            <person name="Saito T."/>
            <person name="Buchrieser C."/>
            <person name="Wardroper A."/>
            <person name="Felder M."/>
            <person name="Thangavelu M."/>
            <person name="Johnson D."/>
            <person name="Knights A."/>
            <person name="Loulseged H."/>
            <person name="Mungall K.L."/>
            <person name="Oliver K."/>
            <person name="Price C."/>
            <person name="Quail M.A."/>
            <person name="Urushihara H."/>
            <person name="Hernandez J."/>
            <person name="Rabbinowitsch E."/>
            <person name="Steffen D."/>
            <person name="Sanders M."/>
            <person name="Ma J."/>
            <person name="Kohara Y."/>
            <person name="Sharp S."/>
            <person name="Simmonds M.N."/>
            <person name="Spiegler S."/>
            <person name="Tivey A."/>
            <person name="Sugano S."/>
            <person name="White B."/>
            <person name="Walker D."/>
            <person name="Woodward J.R."/>
            <person name="Winckler T."/>
            <person name="Tanaka Y."/>
            <person name="Shaulsky G."/>
            <person name="Schleicher M."/>
            <person name="Weinstock G.M."/>
            <person name="Rosenthal A."/>
            <person name="Cox E.C."/>
            <person name="Chisholm R.L."/>
            <person name="Gibbs R.A."/>
            <person name="Loomis W.F."/>
            <person name="Platzer M."/>
            <person name="Kay R.R."/>
            <person name="Williams J.G."/>
            <person name="Dear P.H."/>
            <person name="Noegel A.A."/>
            <person name="Barrell B.G."/>
            <person name="Kuspa A."/>
        </authorList>
    </citation>
    <scope>NUCLEOTIDE SEQUENCE [LARGE SCALE GENOMIC DNA]</scope>
    <source>
        <strain>AX4</strain>
    </source>
</reference>
<proteinExistence type="inferred from homology"/>
<gene>
    <name type="primary">nubp2</name>
    <name type="synonym">nbp2</name>
    <name type="ORF">DDB_G0277157</name>
</gene>
<evidence type="ECO:0000255" key="1">
    <source>
        <dbReference type="HAMAP-Rule" id="MF_03039"/>
    </source>
</evidence>
<comment type="function">
    <text evidence="1">Component of the cytosolic iron-sulfur (Fe/S) protein assembly (CIA) machinery. Required for maturation of extramitochondrial Fe-S proteins. The nubp1-nubp2 heterotetramer forms a Fe-S scaffold complex, mediating the de novo assembly of an Fe-S cluster and its transfer to target apoproteins.</text>
</comment>
<comment type="cofactor">
    <cofactor evidence="1">
        <name>[4Fe-4S] cluster</name>
        <dbReference type="ChEBI" id="CHEBI:49883"/>
    </cofactor>
    <text evidence="1">Binds 4 [4Fe-4S] clusters per heterotetramer. Contains two stable clusters in the N-termini of nubp1 and two labile, bridging clusters between subunits of the nubp1-nubp2 heterotetramer.</text>
</comment>
<comment type="subunit">
    <text evidence="1">Heterotetramer of 2 nubp1 and 2 nubp2 chains.</text>
</comment>
<comment type="subcellular location">
    <subcellularLocation>
        <location evidence="1">Cytoplasm</location>
    </subcellularLocation>
</comment>
<comment type="similarity">
    <text evidence="1">Belongs to the Mrp/NBP35 ATP-binding proteins family. NUBP2/CFD1 subfamily.</text>
</comment>
<sequence length="265" mass="28962">MDKIKHKILVLSGKGGVGKSTVSSQLALYLSHIGYKVGLLDVDLCGPSIPKMMGLESKDVHKSTKGWVPVYTDESQKLGVISIQFLLGDKDTPVIWRGPKKNSMIKQFIDDVNWGEIDFLIIDTPPGTSDEHISVTEELLKHNPDGAILVTTPQAVSISDVKKEISFCNAMKLPIIGIIENMSGYVCPHCSECTNIFSSEGGKLLAEQCNIKFLGKLPIDPNLSICSERGINYFTEYPNSSTLASLKSFVDNFNFKSSTTTTATN</sequence>
<protein>
    <recommendedName>
        <fullName evidence="1">Cytosolic Fe-S cluster assembly factor NUBP2 homolog</fullName>
    </recommendedName>
</protein>
<keyword id="KW-0004">4Fe-4S</keyword>
<keyword id="KW-0067">ATP-binding</keyword>
<keyword id="KW-0963">Cytoplasm</keyword>
<keyword id="KW-0408">Iron</keyword>
<keyword id="KW-0411">Iron-sulfur</keyword>
<keyword id="KW-0479">Metal-binding</keyword>
<keyword id="KW-0547">Nucleotide-binding</keyword>
<keyword id="KW-1185">Reference proteome</keyword>
<name>NUBP2_DICDI</name>
<accession>Q76NZ7</accession>
<accession>Q54ZR9</accession>